<evidence type="ECO:0000255" key="1">
    <source>
        <dbReference type="PROSITE-ProRule" id="PRU00208"/>
    </source>
</evidence>
<evidence type="ECO:0000255" key="2">
    <source>
        <dbReference type="PROSITE-ProRule" id="PRU01024"/>
    </source>
</evidence>
<evidence type="ECO:0000255" key="3">
    <source>
        <dbReference type="PROSITE-ProRule" id="PRU10015"/>
    </source>
</evidence>
<evidence type="ECO:0000256" key="4">
    <source>
        <dbReference type="SAM" id="MobiDB-lite"/>
    </source>
</evidence>
<evidence type="ECO:0000269" key="5">
    <source>
    </source>
</evidence>
<evidence type="ECO:0000269" key="6">
    <source>
    </source>
</evidence>
<evidence type="ECO:0000305" key="7"/>
<evidence type="ECO:0000305" key="8">
    <source>
    </source>
</evidence>
<evidence type="ECO:0007744" key="9">
    <source>
    </source>
</evidence>
<evidence type="ECO:0007744" key="10">
    <source>
    </source>
</evidence>
<sequence>MYEQFEFSFFFFENSDNKVKYKAHLISSIKRWSIITCMRCFWTVQKSIFKARFFACRNFVKKHNYKLISTMTGSTEMVPPTMKHTVDNKRLSSPLTDSGNRRTKKPKLRKYKAKKVETTSPMGVLEFEVNDLLKSQNLSREQVLNDVTSILNDKSSTDGPIVLQYHREVKNVKVLEITSNGNGLALIDNPVETEKKQVVIIPFGLPGDVVNIKVFKTHPYYVESDLLDVVEKSPMRRDDLIRDKYFGKSSGSQLEFLTYDDQLELKRKTIMNAYKFFAPRLVAEKLLPPFDTTVASPLQFGYRTKITPHFDMPKRKQKELSVRPPLGFGQKGRPQWRKDTLDIGGHGSILDIDECVLATEVLNKGLTNERRKFEQEFKNYKKGATILLRENTTILDPSKPTLEQLTEEASRDENGDISYVEVEDKKNNVRLAKTCVTNPRQIVTEYVDGYTFNFSAGEFFQNNNSILPIVTKYVRDNLQAPAKGDDNKTKFLVDAYCGSGLFSICSSKGVDKVIGVEISADSVSFAEKNAKANGVENCRFIVGKAEKLFESIDTPSENTSVILDPPRKGCDELFLKQLAAYNPAKIIYISCNVHSQARDVEYFLKETENGSAHQIESIRGFDFFPQTHHVESVCIMKRI</sequence>
<keyword id="KW-0489">Methyltransferase</keyword>
<keyword id="KW-0597">Phosphoprotein</keyword>
<keyword id="KW-1185">Reference proteome</keyword>
<keyword id="KW-0949">S-adenosyl-L-methionine</keyword>
<keyword id="KW-0808">Transferase</keyword>
<keyword id="KW-0819">tRNA processing</keyword>
<reference key="1">
    <citation type="journal article" date="1993" name="Yeast">
        <title>The RHO4a and NUD1 genes on Saccharomyces cerevisiae chromosome XI.</title>
        <authorList>
            <person name="van Vliet-Reedijk J.C."/>
            <person name="Planta R.J."/>
        </authorList>
    </citation>
    <scope>NUCLEOTIDE SEQUENCE [GENOMIC DNA]</scope>
    <source>
        <strain>ATCC 204508 / S288c</strain>
    </source>
</reference>
<reference key="2">
    <citation type="journal article" date="2000" name="RNA">
        <title>Identification of the TRM2 gene encoding the tRNA(m5U54)methyltransferase of Saccharomyces cerevisiae.</title>
        <authorList>
            <person name="Nordlund M.E."/>
            <person name="Johansson J.O.M."/>
            <person name="Von Pawel-Rammingen U."/>
            <person name="Bystroem A.S."/>
        </authorList>
    </citation>
    <scope>NUCLEOTIDE SEQUENCE [GENOMIC DNA]</scope>
    <scope>IDENTIFICATION OF FRAMESHIFT</scope>
    <scope>FUNCTION</scope>
    <scope>CATALYTIC ACTIVITY</scope>
</reference>
<reference key="3">
    <citation type="journal article" date="1994" name="Nature">
        <title>Complete DNA sequence of yeast chromosome XI.</title>
        <authorList>
            <person name="Dujon B."/>
            <person name="Alexandraki D."/>
            <person name="Andre B."/>
            <person name="Ansorge W."/>
            <person name="Baladron V."/>
            <person name="Ballesta J.P.G."/>
            <person name="Banrevi A."/>
            <person name="Bolle P.-A."/>
            <person name="Bolotin-Fukuhara M."/>
            <person name="Bossier P."/>
            <person name="Bou G."/>
            <person name="Boyer J."/>
            <person name="Buitrago M.J."/>
            <person name="Cheret G."/>
            <person name="Colleaux L."/>
            <person name="Daignan-Fornier B."/>
            <person name="del Rey F."/>
            <person name="Dion C."/>
            <person name="Domdey H."/>
            <person name="Duesterhoeft A."/>
            <person name="Duesterhus S."/>
            <person name="Entian K.-D."/>
            <person name="Erfle H."/>
            <person name="Esteban P.F."/>
            <person name="Feldmann H."/>
            <person name="Fernandes L."/>
            <person name="Fobo G.M."/>
            <person name="Fritz C."/>
            <person name="Fukuhara H."/>
            <person name="Gabel C."/>
            <person name="Gaillon L."/>
            <person name="Garcia-Cantalejo J.M."/>
            <person name="Garcia-Ramirez J.J."/>
            <person name="Gent M.E."/>
            <person name="Ghazvini M."/>
            <person name="Goffeau A."/>
            <person name="Gonzalez A."/>
            <person name="Grothues D."/>
            <person name="Guerreiro P."/>
            <person name="Hegemann J.H."/>
            <person name="Hewitt N."/>
            <person name="Hilger F."/>
            <person name="Hollenberg C.P."/>
            <person name="Horaitis O."/>
            <person name="Indge K.J."/>
            <person name="Jacquier A."/>
            <person name="James C.M."/>
            <person name="Jauniaux J.-C."/>
            <person name="Jimenez A."/>
            <person name="Keuchel H."/>
            <person name="Kirchrath L."/>
            <person name="Kleine K."/>
            <person name="Koetter P."/>
            <person name="Legrain P."/>
            <person name="Liebl S."/>
            <person name="Louis E.J."/>
            <person name="Maia e Silva A."/>
            <person name="Marck C."/>
            <person name="Monnier A.-L."/>
            <person name="Moestl D."/>
            <person name="Mueller S."/>
            <person name="Obermaier B."/>
            <person name="Oliver S.G."/>
            <person name="Pallier C."/>
            <person name="Pascolo S."/>
            <person name="Pfeiffer F."/>
            <person name="Philippsen P."/>
            <person name="Planta R.J."/>
            <person name="Pohl F.M."/>
            <person name="Pohl T.M."/>
            <person name="Poehlmann R."/>
            <person name="Portetelle D."/>
            <person name="Purnelle B."/>
            <person name="Puzos V."/>
            <person name="Ramezani Rad M."/>
            <person name="Rasmussen S.W."/>
            <person name="Remacha M.A."/>
            <person name="Revuelta J.L."/>
            <person name="Richard G.-F."/>
            <person name="Rieger M."/>
            <person name="Rodrigues-Pousada C."/>
            <person name="Rose M."/>
            <person name="Rupp T."/>
            <person name="Santos M.A."/>
            <person name="Schwager C."/>
            <person name="Sensen C."/>
            <person name="Skala J."/>
            <person name="Soares H."/>
            <person name="Sor F."/>
            <person name="Stegemann J."/>
            <person name="Tettelin H."/>
            <person name="Thierry A."/>
            <person name="Tzermia M."/>
            <person name="Urrestarazu L.A."/>
            <person name="van Dyck L."/>
            <person name="van Vliet-Reedijk J.C."/>
            <person name="Valens M."/>
            <person name="Vandenbol M."/>
            <person name="Vilela C."/>
            <person name="Vissers S."/>
            <person name="von Wettstein D."/>
            <person name="Voss H."/>
            <person name="Wiemann S."/>
            <person name="Xu G."/>
            <person name="Zimmermann J."/>
            <person name="Haasemann M."/>
            <person name="Becker I."/>
            <person name="Mewes H.-W."/>
        </authorList>
    </citation>
    <scope>NUCLEOTIDE SEQUENCE [LARGE SCALE GENOMIC DNA]</scope>
    <source>
        <strain>ATCC 204508 / S288c</strain>
    </source>
</reference>
<reference key="4">
    <citation type="journal article" date="2014" name="G3 (Bethesda)">
        <title>The reference genome sequence of Saccharomyces cerevisiae: Then and now.</title>
        <authorList>
            <person name="Engel S.R."/>
            <person name="Dietrich F.S."/>
            <person name="Fisk D.G."/>
            <person name="Binkley G."/>
            <person name="Balakrishnan R."/>
            <person name="Costanzo M.C."/>
            <person name="Dwight S.S."/>
            <person name="Hitz B.C."/>
            <person name="Karra K."/>
            <person name="Nash R.S."/>
            <person name="Weng S."/>
            <person name="Wong E.D."/>
            <person name="Lloyd P."/>
            <person name="Skrzypek M.S."/>
            <person name="Miyasato S.R."/>
            <person name="Simison M."/>
            <person name="Cherry J.M."/>
        </authorList>
    </citation>
    <scope>GENOME REANNOTATION</scope>
    <source>
        <strain>ATCC 204508 / S288c</strain>
    </source>
</reference>
<reference key="5">
    <citation type="journal article" date="1992" name="Nucleic Acids Res.">
        <title>Yeast RNC1 encodes a chimeric protein, RhoNUC, with a human rho motif and deoxyribonuclease activity.</title>
        <authorList>
            <person name="Chow T.Y.-K."/>
            <person name="Perkins E.L."/>
            <person name="Resnick M.A."/>
        </authorList>
    </citation>
    <scope>NUCLEOTIDE SEQUENCE [GENOMIC DNA] OF 1-168</scope>
</reference>
<reference key="6">
    <citation type="journal article" date="2003" name="Genome Biol.">
        <title>Reinvestigation of the Saccharomyces cerevisiae genome annotation by comparison to the genome of a related fungus: Ashbya gossypii.</title>
        <authorList>
            <person name="Brachat S."/>
            <person name="Dietrich F.S."/>
            <person name="Voegeli S."/>
            <person name="Zhang Z."/>
            <person name="Stuart L."/>
            <person name="Lerch A."/>
            <person name="Gates K."/>
            <person name="Gaffney T.D."/>
            <person name="Philippsen P."/>
        </authorList>
    </citation>
    <scope>NUCLEOTIDE SEQUENCE [GENOMIC DNA] OF 552-628</scope>
    <scope>IDENTIFICATION OF FRAMESHIFT</scope>
    <source>
        <strain>ATCC 204511 / S288c / AB972</strain>
    </source>
</reference>
<reference key="7">
    <citation type="journal article" date="2002" name="RNA">
        <title>Dual function of the tRNA(m(5)U54)methyltransferase in tRNA maturation.</title>
        <authorList>
            <person name="Johansson M.J."/>
            <person name="Bystroem A.S."/>
        </authorList>
    </citation>
    <scope>FUNCTION</scope>
    <scope>MUTAGENESIS OF GLY-498 AND CYS-591</scope>
</reference>
<reference key="8">
    <citation type="journal article" date="2007" name="J. Proteome Res.">
        <title>Large-scale phosphorylation analysis of alpha-factor-arrested Saccharomyces cerevisiae.</title>
        <authorList>
            <person name="Li X."/>
            <person name="Gerber S.A."/>
            <person name="Rudner A.D."/>
            <person name="Beausoleil S.A."/>
            <person name="Haas W."/>
            <person name="Villen J."/>
            <person name="Elias J.E."/>
            <person name="Gygi S.P."/>
        </authorList>
    </citation>
    <scope>PHOSPHORYLATION [LARGE SCALE ANALYSIS] AT SER-92 AND SER-93</scope>
    <scope>IDENTIFICATION BY MASS SPECTROMETRY [LARGE SCALE ANALYSIS]</scope>
    <source>
        <strain>ADR376</strain>
    </source>
</reference>
<reference key="9">
    <citation type="journal article" date="2007" name="Proc. Natl. Acad. Sci. U.S.A.">
        <title>Analysis of phosphorylation sites on proteins from Saccharomyces cerevisiae by electron transfer dissociation (ETD) mass spectrometry.</title>
        <authorList>
            <person name="Chi A."/>
            <person name="Huttenhower C."/>
            <person name="Geer L.Y."/>
            <person name="Coon J.J."/>
            <person name="Syka J.E.P."/>
            <person name="Bai D.L."/>
            <person name="Shabanowitz J."/>
            <person name="Burke D.J."/>
            <person name="Troyanskaya O.G."/>
            <person name="Hunt D.F."/>
        </authorList>
    </citation>
    <scope>IDENTIFICATION BY MASS SPECTROMETRY [LARGE SCALE ANALYSIS]</scope>
</reference>
<reference key="10">
    <citation type="journal article" date="2008" name="Mol. Cell. Proteomics">
        <title>A multidimensional chromatography technology for in-depth phosphoproteome analysis.</title>
        <authorList>
            <person name="Albuquerque C.P."/>
            <person name="Smolka M.B."/>
            <person name="Payne S.H."/>
            <person name="Bafna V."/>
            <person name="Eng J."/>
            <person name="Zhou H."/>
        </authorList>
    </citation>
    <scope>IDENTIFICATION BY MASS SPECTROMETRY [LARGE SCALE ANALYSIS]</scope>
</reference>
<reference key="11">
    <citation type="journal article" date="2009" name="Science">
        <title>Global analysis of Cdk1 substrate phosphorylation sites provides insights into evolution.</title>
        <authorList>
            <person name="Holt L.J."/>
            <person name="Tuch B.B."/>
            <person name="Villen J."/>
            <person name="Johnson A.D."/>
            <person name="Gygi S.P."/>
            <person name="Morgan D.O."/>
        </authorList>
    </citation>
    <scope>PHOSPHORYLATION [LARGE SCALE ANALYSIS] AT SER-92 AND SER-93</scope>
    <scope>IDENTIFICATION BY MASS SPECTROMETRY [LARGE SCALE ANALYSIS]</scope>
</reference>
<comment type="function">
    <text evidence="5 6">Catalyzes the formation of 5-methyl-uridine at position 54 (m5U54) in all tRNA. May also have a role in tRNA stabilization or maturation.</text>
</comment>
<comment type="catalytic activity">
    <reaction evidence="5">
        <text>uridine(54) in tRNA + S-adenosyl-L-methionine = 5-methyluridine(54) in tRNA + S-adenosyl-L-homocysteine + H(+)</text>
        <dbReference type="Rhea" id="RHEA:42712"/>
        <dbReference type="Rhea" id="RHEA-COMP:10167"/>
        <dbReference type="Rhea" id="RHEA-COMP:10193"/>
        <dbReference type="ChEBI" id="CHEBI:15378"/>
        <dbReference type="ChEBI" id="CHEBI:57856"/>
        <dbReference type="ChEBI" id="CHEBI:59789"/>
        <dbReference type="ChEBI" id="CHEBI:65315"/>
        <dbReference type="ChEBI" id="CHEBI:74447"/>
        <dbReference type="EC" id="2.1.1.35"/>
    </reaction>
</comment>
<comment type="similarity">
    <text evidence="2">Belongs to the class I-like SAM-binding methyltransferase superfamily. RNA M5U methyltransferase family.</text>
</comment>
<comment type="caution">
    <text evidence="8">Was originally thought to be an endo-exonuclease.</text>
</comment>
<comment type="caution">
    <text evidence="7">It is uncertain whether Met-1, Met-38, Met-71, Met-77 or Met-82 is the initiator.</text>
</comment>
<comment type="sequence caution" evidence="7">
    <conflict type="miscellaneous discrepancy">
        <sequence resource="EMBL-CDS" id="CAA78500"/>
    </conflict>
    <text>Cloning artifact which fused this protein with RHO4.</text>
</comment>
<comment type="sequence caution" evidence="7">
    <conflict type="frameshift">
        <sequence resource="EMBL-CDS" id="CAA81021"/>
    </conflict>
</comment>
<comment type="sequence caution" evidence="7">
    <conflict type="frameshift">
        <sequence resource="EMBL-CDS" id="CAA82134"/>
    </conflict>
</comment>
<comment type="sequence caution" evidence="7">
    <conflict type="erroneous initiation">
        <sequence resource="EMBL-CDS" id="CAC01942"/>
    </conflict>
</comment>
<proteinExistence type="evidence at protein level"/>
<gene>
    <name type="primary">TRM2</name>
    <name type="synonym">NUC2</name>
    <name type="synonym">NUD1</name>
    <name type="synonym">RNC1</name>
    <name type="ordered locus">YKR056W</name>
</gene>
<dbReference type="EC" id="2.1.1.35"/>
<dbReference type="EMBL" id="Z25734">
    <property type="protein sequence ID" value="CAA81021.1"/>
    <property type="status" value="ALT_FRAME"/>
    <property type="molecule type" value="Genomic_DNA"/>
</dbReference>
<dbReference type="EMBL" id="AJ250970">
    <property type="protein sequence ID" value="CAC01942.1"/>
    <property type="status" value="ALT_INIT"/>
    <property type="molecule type" value="Genomic_DNA"/>
</dbReference>
<dbReference type="EMBL" id="Z28281">
    <property type="protein sequence ID" value="CAA82134.1"/>
    <property type="status" value="ALT_FRAME"/>
    <property type="molecule type" value="Genomic_DNA"/>
</dbReference>
<dbReference type="EMBL" id="Z14126">
    <property type="protein sequence ID" value="CAA78500.1"/>
    <property type="status" value="ALT_SEQ"/>
    <property type="molecule type" value="Genomic_DNA"/>
</dbReference>
<dbReference type="EMBL" id="AY260897">
    <property type="protein sequence ID" value="AAP21765.1"/>
    <property type="molecule type" value="Genomic_DNA"/>
</dbReference>
<dbReference type="EMBL" id="BK006944">
    <property type="protein sequence ID" value="DAA09207.1"/>
    <property type="molecule type" value="Genomic_DNA"/>
</dbReference>
<dbReference type="PIR" id="S37744">
    <property type="entry name" value="S37744"/>
</dbReference>
<dbReference type="RefSeq" id="NP_012982.2">
    <property type="nucleotide sequence ID" value="NM_001179846.1"/>
</dbReference>
<dbReference type="SMR" id="P33753"/>
<dbReference type="BioGRID" id="34187">
    <property type="interactions" value="107"/>
</dbReference>
<dbReference type="FunCoup" id="P33753">
    <property type="interactions" value="343"/>
</dbReference>
<dbReference type="MINT" id="P33753"/>
<dbReference type="STRING" id="4932.YKR056W"/>
<dbReference type="iPTMnet" id="P33753"/>
<dbReference type="PaxDb" id="4932-YKR056W"/>
<dbReference type="PeptideAtlas" id="P33753"/>
<dbReference type="EnsemblFungi" id="YKR056W_mRNA">
    <property type="protein sequence ID" value="YKR056W"/>
    <property type="gene ID" value="YKR056W"/>
</dbReference>
<dbReference type="GeneID" id="853930"/>
<dbReference type="KEGG" id="sce:YKR056W"/>
<dbReference type="AGR" id="SGD:S000001764"/>
<dbReference type="SGD" id="S000001764">
    <property type="gene designation" value="TRM2"/>
</dbReference>
<dbReference type="VEuPathDB" id="FungiDB:YKR056W"/>
<dbReference type="eggNOG" id="KOG2187">
    <property type="taxonomic scope" value="Eukaryota"/>
</dbReference>
<dbReference type="GeneTree" id="ENSGT00530000063723"/>
<dbReference type="HOGENOM" id="CLU_014689_3_2_1"/>
<dbReference type="InParanoid" id="P33753"/>
<dbReference type="OMA" id="GGCKWQH"/>
<dbReference type="OrthoDB" id="10250660at2759"/>
<dbReference type="BioCyc" id="YEAST:G3O-32025-MONOMER"/>
<dbReference type="BioGRID-ORCS" id="853930">
    <property type="hits" value="9 hits in 10 CRISPR screens"/>
</dbReference>
<dbReference type="PRO" id="PR:P33753"/>
<dbReference type="Proteomes" id="UP000002311">
    <property type="component" value="Chromosome XI"/>
</dbReference>
<dbReference type="RNAct" id="P33753">
    <property type="molecule type" value="protein"/>
</dbReference>
<dbReference type="GO" id="GO:0051908">
    <property type="term" value="F:double-stranded DNA 5'-3' DNA exonuclease activity"/>
    <property type="evidence" value="ECO:0000314"/>
    <property type="project" value="SGD"/>
</dbReference>
<dbReference type="GO" id="GO:0000014">
    <property type="term" value="F:single-stranded DNA endodeoxyribonuclease activity"/>
    <property type="evidence" value="ECO:0000314"/>
    <property type="project" value="SGD"/>
</dbReference>
<dbReference type="GO" id="GO:0030697">
    <property type="term" value="F:tRNA (uracil(54)-C5)-methyltransferase activity, S-adenosyl methionine-dependent"/>
    <property type="evidence" value="ECO:0000314"/>
    <property type="project" value="SGD"/>
</dbReference>
<dbReference type="GO" id="GO:0032259">
    <property type="term" value="P:methylation"/>
    <property type="evidence" value="ECO:0007669"/>
    <property type="project" value="UniProtKB-KW"/>
</dbReference>
<dbReference type="GO" id="GO:0006400">
    <property type="term" value="P:tRNA modification"/>
    <property type="evidence" value="ECO:0000314"/>
    <property type="project" value="SGD"/>
</dbReference>
<dbReference type="CDD" id="cd02440">
    <property type="entry name" value="AdoMet_MTases"/>
    <property type="match status" value="1"/>
</dbReference>
<dbReference type="FunFam" id="2.40.50.140:FF:000201">
    <property type="entry name" value="TRM2p tRNA methyltransferase"/>
    <property type="match status" value="1"/>
</dbReference>
<dbReference type="FunFam" id="3.40.50.150:FF:000174">
    <property type="entry name" value="TRM2p tRNA methyltransferase"/>
    <property type="match status" value="1"/>
</dbReference>
<dbReference type="Gene3D" id="2.40.50.1070">
    <property type="match status" value="1"/>
</dbReference>
<dbReference type="Gene3D" id="2.40.50.140">
    <property type="entry name" value="Nucleic acid-binding proteins"/>
    <property type="match status" value="1"/>
</dbReference>
<dbReference type="Gene3D" id="3.40.50.150">
    <property type="entry name" value="Vaccinia Virus protein VP39"/>
    <property type="match status" value="1"/>
</dbReference>
<dbReference type="InterPro" id="IPR030390">
    <property type="entry name" value="MeTrfase_TrmA_AS"/>
</dbReference>
<dbReference type="InterPro" id="IPR030391">
    <property type="entry name" value="MeTrfase_TrmA_CS"/>
</dbReference>
<dbReference type="InterPro" id="IPR012340">
    <property type="entry name" value="NA-bd_OB-fold"/>
</dbReference>
<dbReference type="InterPro" id="IPR029063">
    <property type="entry name" value="SAM-dependent_MTases_sf"/>
</dbReference>
<dbReference type="InterPro" id="IPR002792">
    <property type="entry name" value="TRAM_dom"/>
</dbReference>
<dbReference type="InterPro" id="IPR025795">
    <property type="entry name" value="tRNA_(uracil-5-)_MeTrfase"/>
</dbReference>
<dbReference type="InterPro" id="IPR010280">
    <property type="entry name" value="U5_MeTrfase_fam"/>
</dbReference>
<dbReference type="PANTHER" id="PTHR11061">
    <property type="entry name" value="RNA M5U METHYLTRANSFERASE"/>
    <property type="match status" value="1"/>
</dbReference>
<dbReference type="PANTHER" id="PTHR11061:SF30">
    <property type="entry name" value="TRNA (URACIL(54)-C(5))-METHYLTRANSFERASE"/>
    <property type="match status" value="1"/>
</dbReference>
<dbReference type="Pfam" id="PF01938">
    <property type="entry name" value="TRAM"/>
    <property type="match status" value="1"/>
</dbReference>
<dbReference type="Pfam" id="PF05958">
    <property type="entry name" value="tRNA_U5-meth_tr"/>
    <property type="match status" value="1"/>
</dbReference>
<dbReference type="SUPFAM" id="SSF50249">
    <property type="entry name" value="Nucleic acid-binding proteins"/>
    <property type="match status" value="1"/>
</dbReference>
<dbReference type="SUPFAM" id="SSF53335">
    <property type="entry name" value="S-adenosyl-L-methionine-dependent methyltransferases"/>
    <property type="match status" value="1"/>
</dbReference>
<dbReference type="PROSITE" id="PS51687">
    <property type="entry name" value="SAM_MT_RNA_M5U"/>
    <property type="match status" value="1"/>
</dbReference>
<dbReference type="PROSITE" id="PS51622">
    <property type="entry name" value="SAM_MT_RNA_M5U_2"/>
    <property type="match status" value="1"/>
</dbReference>
<dbReference type="PROSITE" id="PS50926">
    <property type="entry name" value="TRAM"/>
    <property type="match status" value="1"/>
</dbReference>
<dbReference type="PROSITE" id="PS01230">
    <property type="entry name" value="TRMA_1"/>
    <property type="match status" value="1"/>
</dbReference>
<dbReference type="PROSITE" id="PS01231">
    <property type="entry name" value="TRMA_2"/>
    <property type="match status" value="1"/>
</dbReference>
<protein>
    <recommendedName>
        <fullName>tRNA (uracil(54)-C(5))-methyltransferase</fullName>
        <ecNumber>2.1.1.35</ecNumber>
    </recommendedName>
    <alternativeName>
        <fullName>Transfer RNA methyltransferase 2</fullName>
    </alternativeName>
    <alternativeName>
        <fullName>tRNA(m5U54)-methyltransferase</fullName>
    </alternativeName>
</protein>
<organism>
    <name type="scientific">Saccharomyces cerevisiae (strain ATCC 204508 / S288c)</name>
    <name type="common">Baker's yeast</name>
    <dbReference type="NCBI Taxonomy" id="559292"/>
    <lineage>
        <taxon>Eukaryota</taxon>
        <taxon>Fungi</taxon>
        <taxon>Dikarya</taxon>
        <taxon>Ascomycota</taxon>
        <taxon>Saccharomycotina</taxon>
        <taxon>Saccharomycetes</taxon>
        <taxon>Saccharomycetales</taxon>
        <taxon>Saccharomycetaceae</taxon>
        <taxon>Saccharomyces</taxon>
    </lineage>
</organism>
<name>TRM2_YEAST</name>
<feature type="chain" id="PRO_0000162059" description="tRNA (uracil(54)-C(5))-methyltransferase">
    <location>
        <begin position="1"/>
        <end position="639"/>
    </location>
</feature>
<feature type="domain" description="TRAM" evidence="1">
    <location>
        <begin position="163"/>
        <end position="228"/>
    </location>
</feature>
<feature type="region of interest" description="Disordered" evidence="4">
    <location>
        <begin position="78"/>
        <end position="113"/>
    </location>
</feature>
<feature type="compositionally biased region" description="Basic residues" evidence="4">
    <location>
        <begin position="101"/>
        <end position="113"/>
    </location>
</feature>
<feature type="active site" description="Nucleophile" evidence="2">
    <location>
        <position position="591"/>
    </location>
</feature>
<feature type="active site" description="Proton acceptor" evidence="3">
    <location>
        <position position="631"/>
    </location>
</feature>
<feature type="binding site" evidence="2">
    <location>
        <position position="461"/>
    </location>
    <ligand>
        <name>S-adenosyl-L-methionine</name>
        <dbReference type="ChEBI" id="CHEBI:59789"/>
    </ligand>
</feature>
<feature type="binding site" evidence="2">
    <location>
        <position position="496"/>
    </location>
    <ligand>
        <name>S-adenosyl-L-methionine</name>
        <dbReference type="ChEBI" id="CHEBI:59789"/>
    </ligand>
</feature>
<feature type="binding site" evidence="2">
    <location>
        <position position="517"/>
    </location>
    <ligand>
        <name>S-adenosyl-L-methionine</name>
        <dbReference type="ChEBI" id="CHEBI:59789"/>
    </ligand>
</feature>
<feature type="binding site" evidence="2">
    <location>
        <position position="564"/>
    </location>
    <ligand>
        <name>S-adenosyl-L-methionine</name>
        <dbReference type="ChEBI" id="CHEBI:59789"/>
    </ligand>
</feature>
<feature type="modified residue" description="Phosphoserine" evidence="9 10">
    <location>
        <position position="92"/>
    </location>
</feature>
<feature type="modified residue" description="Phosphoserine" evidence="9 10">
    <location>
        <position position="93"/>
    </location>
</feature>
<feature type="mutagenesis site" description="Unable to methylate tRNA." evidence="6">
    <original>G</original>
    <variation>D</variation>
    <location>
        <position position="498"/>
    </location>
</feature>
<feature type="mutagenesis site" description="Unable to methylate tRNA." evidence="6">
    <original>C</original>
    <variation>A</variation>
    <location>
        <position position="591"/>
    </location>
</feature>
<feature type="sequence conflict" description="In Ref. 5; CAA78500." evidence="7" ref="5">
    <original>H</original>
    <variation>Y</variation>
    <location>
        <position position="24"/>
    </location>
</feature>
<accession>P33753</accession>
<accession>D6VXB7</accession>
<accession>P30618</accession>
<accession>Q86ZR6</accession>
<accession>Q9HGQ5</accession>